<keyword id="KW-0413">Isomerase</keyword>
<keyword id="KW-0663">Pyridoxal phosphate</keyword>
<keyword id="KW-1185">Reference proteome</keyword>
<organism>
    <name type="scientific">Caldanaerobacter subterraneus subsp. tengcongensis (strain DSM 15242 / JCM 11007 / NBRC 100824 / MB4)</name>
    <name type="common">Thermoanaerobacter tengcongensis</name>
    <dbReference type="NCBI Taxonomy" id="273068"/>
    <lineage>
        <taxon>Bacteria</taxon>
        <taxon>Bacillati</taxon>
        <taxon>Bacillota</taxon>
        <taxon>Clostridia</taxon>
        <taxon>Thermoanaerobacterales</taxon>
        <taxon>Thermoanaerobacteraceae</taxon>
        <taxon>Caldanaerobacter</taxon>
    </lineage>
</organism>
<comment type="function">
    <text evidence="1">Catalyzes the interconversion of L-alanine and D-alanine. May also act on other amino acids.</text>
</comment>
<comment type="catalytic activity">
    <reaction evidence="1">
        <text>L-alanine = D-alanine</text>
        <dbReference type="Rhea" id="RHEA:20249"/>
        <dbReference type="ChEBI" id="CHEBI:57416"/>
        <dbReference type="ChEBI" id="CHEBI:57972"/>
        <dbReference type="EC" id="5.1.1.1"/>
    </reaction>
</comment>
<comment type="cofactor">
    <cofactor evidence="1">
        <name>pyridoxal 5'-phosphate</name>
        <dbReference type="ChEBI" id="CHEBI:597326"/>
    </cofactor>
</comment>
<comment type="pathway">
    <text evidence="1">Amino-acid biosynthesis; D-alanine biosynthesis; D-alanine from L-alanine: step 1/1.</text>
</comment>
<comment type="similarity">
    <text evidence="1">Belongs to the alanine racemase family.</text>
</comment>
<proteinExistence type="inferred from homology"/>
<gene>
    <name type="primary">alr2</name>
    <name type="ordered locus">TTE2168</name>
</gene>
<dbReference type="EC" id="5.1.1.1" evidence="1"/>
<dbReference type="EMBL" id="AE008691">
    <property type="protein sequence ID" value="AAM25327.1"/>
    <property type="molecule type" value="Genomic_DNA"/>
</dbReference>
<dbReference type="RefSeq" id="WP_011026254.1">
    <property type="nucleotide sequence ID" value="NC_003869.1"/>
</dbReference>
<dbReference type="SMR" id="Q8R860"/>
<dbReference type="STRING" id="273068.TTE2168"/>
<dbReference type="KEGG" id="tte:TTE2168"/>
<dbReference type="eggNOG" id="COG0787">
    <property type="taxonomic scope" value="Bacteria"/>
</dbReference>
<dbReference type="HOGENOM" id="CLU_028393_2_2_9"/>
<dbReference type="OrthoDB" id="9813814at2"/>
<dbReference type="BRENDA" id="5.1.1.1">
    <property type="organism ID" value="6784"/>
</dbReference>
<dbReference type="UniPathway" id="UPA00042">
    <property type="reaction ID" value="UER00497"/>
</dbReference>
<dbReference type="Proteomes" id="UP000000555">
    <property type="component" value="Chromosome"/>
</dbReference>
<dbReference type="GO" id="GO:0005829">
    <property type="term" value="C:cytosol"/>
    <property type="evidence" value="ECO:0007669"/>
    <property type="project" value="TreeGrafter"/>
</dbReference>
<dbReference type="GO" id="GO:0008784">
    <property type="term" value="F:alanine racemase activity"/>
    <property type="evidence" value="ECO:0007669"/>
    <property type="project" value="UniProtKB-UniRule"/>
</dbReference>
<dbReference type="GO" id="GO:0030170">
    <property type="term" value="F:pyridoxal phosphate binding"/>
    <property type="evidence" value="ECO:0007669"/>
    <property type="project" value="UniProtKB-UniRule"/>
</dbReference>
<dbReference type="GO" id="GO:0030632">
    <property type="term" value="P:D-alanine biosynthetic process"/>
    <property type="evidence" value="ECO:0007669"/>
    <property type="project" value="UniProtKB-UniRule"/>
</dbReference>
<dbReference type="GO" id="GO:0009252">
    <property type="term" value="P:peptidoglycan biosynthetic process"/>
    <property type="evidence" value="ECO:0007669"/>
    <property type="project" value="TreeGrafter"/>
</dbReference>
<dbReference type="CDD" id="cd00430">
    <property type="entry name" value="PLPDE_III_AR"/>
    <property type="match status" value="1"/>
</dbReference>
<dbReference type="FunFam" id="2.40.37.10:FF:000006">
    <property type="entry name" value="Alanine racemase"/>
    <property type="match status" value="1"/>
</dbReference>
<dbReference type="FunFam" id="3.20.20.10:FF:000002">
    <property type="entry name" value="Alanine racemase"/>
    <property type="match status" value="1"/>
</dbReference>
<dbReference type="Gene3D" id="3.20.20.10">
    <property type="entry name" value="Alanine racemase"/>
    <property type="match status" value="1"/>
</dbReference>
<dbReference type="Gene3D" id="2.40.37.10">
    <property type="entry name" value="Lyase, Ornithine Decarboxylase, Chain A, domain 1"/>
    <property type="match status" value="1"/>
</dbReference>
<dbReference type="HAMAP" id="MF_01201">
    <property type="entry name" value="Ala_racemase"/>
    <property type="match status" value="1"/>
</dbReference>
<dbReference type="InterPro" id="IPR000821">
    <property type="entry name" value="Ala_racemase"/>
</dbReference>
<dbReference type="InterPro" id="IPR009006">
    <property type="entry name" value="Ala_racemase/Decarboxylase_C"/>
</dbReference>
<dbReference type="InterPro" id="IPR011079">
    <property type="entry name" value="Ala_racemase_C"/>
</dbReference>
<dbReference type="InterPro" id="IPR001608">
    <property type="entry name" value="Ala_racemase_N"/>
</dbReference>
<dbReference type="InterPro" id="IPR020622">
    <property type="entry name" value="Ala_racemase_pyridoxalP-BS"/>
</dbReference>
<dbReference type="InterPro" id="IPR029066">
    <property type="entry name" value="PLP-binding_barrel"/>
</dbReference>
<dbReference type="NCBIfam" id="TIGR00492">
    <property type="entry name" value="alr"/>
    <property type="match status" value="1"/>
</dbReference>
<dbReference type="PANTHER" id="PTHR30511">
    <property type="entry name" value="ALANINE RACEMASE"/>
    <property type="match status" value="1"/>
</dbReference>
<dbReference type="PANTHER" id="PTHR30511:SF0">
    <property type="entry name" value="ALANINE RACEMASE, CATABOLIC-RELATED"/>
    <property type="match status" value="1"/>
</dbReference>
<dbReference type="Pfam" id="PF00842">
    <property type="entry name" value="Ala_racemase_C"/>
    <property type="match status" value="1"/>
</dbReference>
<dbReference type="Pfam" id="PF01168">
    <property type="entry name" value="Ala_racemase_N"/>
    <property type="match status" value="1"/>
</dbReference>
<dbReference type="PRINTS" id="PR00992">
    <property type="entry name" value="ALARACEMASE"/>
</dbReference>
<dbReference type="SMART" id="SM01005">
    <property type="entry name" value="Ala_racemase_C"/>
    <property type="match status" value="1"/>
</dbReference>
<dbReference type="SUPFAM" id="SSF50621">
    <property type="entry name" value="Alanine racemase C-terminal domain-like"/>
    <property type="match status" value="1"/>
</dbReference>
<dbReference type="SUPFAM" id="SSF51419">
    <property type="entry name" value="PLP-binding barrel"/>
    <property type="match status" value="1"/>
</dbReference>
<dbReference type="PROSITE" id="PS00395">
    <property type="entry name" value="ALANINE_RACEMASE"/>
    <property type="match status" value="1"/>
</dbReference>
<sequence length="388" mass="43755">MFDEIRPTRVEVNLDSIVHNFREIKRVVGDRVKVMGVVKANAYGHGAYHVAKALVENGVDYLAVATVEEALELRSYGITAPVLILGYTPLSQAGEAVEKDVTFTAFDLKYVKELGEIASRKGKKAKIHVKIDTGMGRIGYTDFDLAEREIEEMSKLEGIELEGIFSHFATSDEKDKDYAREQFERFADMLKRLEKRGVNITLKHIANSGAITDLNYAYLDMVRPGITLYGSYPSNDVNKILDLRPAMNFKTKIVYIKEVPENTSISYGRTFITKRPSKIATLPIGYADGLNRLLSNNHEVLVRGKYVPIVGRVCMDQTMIDVTEVEGVEVGDEVVIFGEQEGKRITADDIAKKLRTIPHEVYCGISRRVPRIYIYRGEVFDVKNYLKI</sequence>
<name>ALR2_CALS4</name>
<feature type="chain" id="PRO_0000114589" description="Alanine racemase 2">
    <location>
        <begin position="1"/>
        <end position="388"/>
    </location>
</feature>
<feature type="active site" description="Proton acceptor; specific for D-alanine" evidence="1">
    <location>
        <position position="39"/>
    </location>
</feature>
<feature type="active site" description="Proton acceptor; specific for L-alanine" evidence="1">
    <location>
        <position position="267"/>
    </location>
</feature>
<feature type="binding site" evidence="1">
    <location>
        <position position="137"/>
    </location>
    <ligand>
        <name>substrate</name>
    </ligand>
</feature>
<feature type="binding site" evidence="1">
    <location>
        <position position="315"/>
    </location>
    <ligand>
        <name>substrate</name>
    </ligand>
</feature>
<feature type="modified residue" description="N6-(pyridoxal phosphate)lysine" evidence="1">
    <location>
        <position position="39"/>
    </location>
</feature>
<accession>Q8R860</accession>
<reference key="1">
    <citation type="journal article" date="2002" name="Genome Res.">
        <title>A complete sequence of the T. tengcongensis genome.</title>
        <authorList>
            <person name="Bao Q."/>
            <person name="Tian Y."/>
            <person name="Li W."/>
            <person name="Xu Z."/>
            <person name="Xuan Z."/>
            <person name="Hu S."/>
            <person name="Dong W."/>
            <person name="Yang J."/>
            <person name="Chen Y."/>
            <person name="Xue Y."/>
            <person name="Xu Y."/>
            <person name="Lai X."/>
            <person name="Huang L."/>
            <person name="Dong X."/>
            <person name="Ma Y."/>
            <person name="Ling L."/>
            <person name="Tan H."/>
            <person name="Chen R."/>
            <person name="Wang J."/>
            <person name="Yu J."/>
            <person name="Yang H."/>
        </authorList>
    </citation>
    <scope>NUCLEOTIDE SEQUENCE [LARGE SCALE GENOMIC DNA]</scope>
    <source>
        <strain>DSM 15242 / JCM 11007 / NBRC 100824 / MB4</strain>
    </source>
</reference>
<evidence type="ECO:0000255" key="1">
    <source>
        <dbReference type="HAMAP-Rule" id="MF_01201"/>
    </source>
</evidence>
<protein>
    <recommendedName>
        <fullName evidence="1">Alanine racemase 2</fullName>
        <ecNumber evidence="1">5.1.1.1</ecNumber>
    </recommendedName>
</protein>